<feature type="chain" id="PRO_1000077639" description="Recombination-associated protein RdgC">
    <location>
        <begin position="1"/>
        <end position="299"/>
    </location>
</feature>
<sequence length="299" mass="33248">MWFKQISFYPLNKEKLPEADALADKLAEAEFTHCQGLDWFSEGFTAPVSFSPELVFPADFTLRVALKKEEKVLPAGVIRDILEEKVAEIQNNEARNVGRKEKQELKEQITDDLLPRAFTRSSRTEAVFNTRHGYLLVNNAASAKAENILTKLREALGGLEASLPNTKQSPSSLMTGWLLQGHCEGGFELDSDCELKGTGDIVPVVKVSKQDLTADEVVQHVKNGKTVTQLGLVWREQIAFILTQDFTLKRIQYLDVLQEEAESNGDDAAGLAFASQILMAESVSIMLEELVSYLGGWQD</sequence>
<keyword id="KW-0963">Cytoplasm</keyword>
<keyword id="KW-0233">DNA recombination</keyword>
<evidence type="ECO:0000255" key="1">
    <source>
        <dbReference type="HAMAP-Rule" id="MF_00194"/>
    </source>
</evidence>
<gene>
    <name evidence="1" type="primary">rdgC</name>
    <name type="ordered locus">NMCC_0809</name>
</gene>
<name>RDGC_NEIM0</name>
<organism>
    <name type="scientific">Neisseria meningitidis serogroup C (strain 053442)</name>
    <dbReference type="NCBI Taxonomy" id="374833"/>
    <lineage>
        <taxon>Bacteria</taxon>
        <taxon>Pseudomonadati</taxon>
        <taxon>Pseudomonadota</taxon>
        <taxon>Betaproteobacteria</taxon>
        <taxon>Neisseriales</taxon>
        <taxon>Neisseriaceae</taxon>
        <taxon>Neisseria</taxon>
    </lineage>
</organism>
<proteinExistence type="inferred from homology"/>
<dbReference type="EMBL" id="CP000381">
    <property type="protein sequence ID" value="ABX72999.1"/>
    <property type="molecule type" value="Genomic_DNA"/>
</dbReference>
<dbReference type="RefSeq" id="WP_012221503.1">
    <property type="nucleotide sequence ID" value="NC_010120.1"/>
</dbReference>
<dbReference type="SMR" id="A9M3Z9"/>
<dbReference type="KEGG" id="nmn:NMCC_0809"/>
<dbReference type="HOGENOM" id="CLU_052038_0_0_4"/>
<dbReference type="Proteomes" id="UP000001177">
    <property type="component" value="Chromosome"/>
</dbReference>
<dbReference type="GO" id="GO:0005737">
    <property type="term" value="C:cytoplasm"/>
    <property type="evidence" value="ECO:0007669"/>
    <property type="project" value="UniProtKB-UniRule"/>
</dbReference>
<dbReference type="GO" id="GO:0009295">
    <property type="term" value="C:nucleoid"/>
    <property type="evidence" value="ECO:0007669"/>
    <property type="project" value="UniProtKB-SubCell"/>
</dbReference>
<dbReference type="GO" id="GO:0006310">
    <property type="term" value="P:DNA recombination"/>
    <property type="evidence" value="ECO:0007669"/>
    <property type="project" value="UniProtKB-UniRule"/>
</dbReference>
<dbReference type="HAMAP" id="MF_00194">
    <property type="entry name" value="RdgC"/>
    <property type="match status" value="1"/>
</dbReference>
<dbReference type="InterPro" id="IPR007476">
    <property type="entry name" value="RdgC"/>
</dbReference>
<dbReference type="NCBIfam" id="NF001464">
    <property type="entry name" value="PRK00321.1-5"/>
    <property type="match status" value="1"/>
</dbReference>
<dbReference type="PANTHER" id="PTHR38103">
    <property type="entry name" value="RECOMBINATION-ASSOCIATED PROTEIN RDGC"/>
    <property type="match status" value="1"/>
</dbReference>
<dbReference type="PANTHER" id="PTHR38103:SF1">
    <property type="entry name" value="RECOMBINATION-ASSOCIATED PROTEIN RDGC"/>
    <property type="match status" value="1"/>
</dbReference>
<dbReference type="Pfam" id="PF04381">
    <property type="entry name" value="RdgC"/>
    <property type="match status" value="1"/>
</dbReference>
<reference key="1">
    <citation type="journal article" date="2008" name="Genomics">
        <title>Characterization of ST-4821 complex, a unique Neisseria meningitidis clone.</title>
        <authorList>
            <person name="Peng J."/>
            <person name="Yang L."/>
            <person name="Yang F."/>
            <person name="Yang J."/>
            <person name="Yan Y."/>
            <person name="Nie H."/>
            <person name="Zhang X."/>
            <person name="Xiong Z."/>
            <person name="Jiang Y."/>
            <person name="Cheng F."/>
            <person name="Xu X."/>
            <person name="Chen S."/>
            <person name="Sun L."/>
            <person name="Li W."/>
            <person name="Shen Y."/>
            <person name="Shao Z."/>
            <person name="Liang X."/>
            <person name="Xu J."/>
            <person name="Jin Q."/>
        </authorList>
    </citation>
    <scope>NUCLEOTIDE SEQUENCE [LARGE SCALE GENOMIC DNA]</scope>
    <source>
        <strain>053442</strain>
    </source>
</reference>
<comment type="function">
    <text evidence="1">May be involved in recombination.</text>
</comment>
<comment type="subcellular location">
    <subcellularLocation>
        <location evidence="1">Cytoplasm</location>
        <location evidence="1">Nucleoid</location>
    </subcellularLocation>
</comment>
<comment type="similarity">
    <text evidence="1">Belongs to the RdgC family.</text>
</comment>
<protein>
    <recommendedName>
        <fullName evidence="1">Recombination-associated protein RdgC</fullName>
    </recommendedName>
</protein>
<accession>A9M3Z9</accession>